<feature type="chain" id="PRO_0000351893" description="Protein-L-isoaspartate O-methyltransferase">
    <location>
        <begin position="1"/>
        <end position="216"/>
    </location>
</feature>
<feature type="active site" evidence="1">
    <location>
        <position position="64"/>
    </location>
</feature>
<dbReference type="EC" id="2.1.1.77" evidence="1"/>
<dbReference type="EMBL" id="CP000489">
    <property type="protein sequence ID" value="ABL70814.1"/>
    <property type="molecule type" value="Genomic_DNA"/>
</dbReference>
<dbReference type="RefSeq" id="WP_011749005.1">
    <property type="nucleotide sequence ID" value="NC_008686.1"/>
</dbReference>
<dbReference type="SMR" id="A1B5M0"/>
<dbReference type="STRING" id="318586.Pden_2730"/>
<dbReference type="EnsemblBacteria" id="ABL70814">
    <property type="protein sequence ID" value="ABL70814"/>
    <property type="gene ID" value="Pden_2730"/>
</dbReference>
<dbReference type="GeneID" id="93451128"/>
<dbReference type="KEGG" id="pde:Pden_2730"/>
<dbReference type="eggNOG" id="COG2518">
    <property type="taxonomic scope" value="Bacteria"/>
</dbReference>
<dbReference type="HOGENOM" id="CLU_055432_2_0_5"/>
<dbReference type="OrthoDB" id="9810066at2"/>
<dbReference type="Proteomes" id="UP000000361">
    <property type="component" value="Chromosome 1"/>
</dbReference>
<dbReference type="GO" id="GO:0005737">
    <property type="term" value="C:cytoplasm"/>
    <property type="evidence" value="ECO:0007669"/>
    <property type="project" value="UniProtKB-SubCell"/>
</dbReference>
<dbReference type="GO" id="GO:0004719">
    <property type="term" value="F:protein-L-isoaspartate (D-aspartate) O-methyltransferase activity"/>
    <property type="evidence" value="ECO:0007669"/>
    <property type="project" value="UniProtKB-UniRule"/>
</dbReference>
<dbReference type="GO" id="GO:0032259">
    <property type="term" value="P:methylation"/>
    <property type="evidence" value="ECO:0007669"/>
    <property type="project" value="UniProtKB-KW"/>
</dbReference>
<dbReference type="GO" id="GO:0036211">
    <property type="term" value="P:protein modification process"/>
    <property type="evidence" value="ECO:0007669"/>
    <property type="project" value="UniProtKB-UniRule"/>
</dbReference>
<dbReference type="GO" id="GO:0030091">
    <property type="term" value="P:protein repair"/>
    <property type="evidence" value="ECO:0007669"/>
    <property type="project" value="UniProtKB-UniRule"/>
</dbReference>
<dbReference type="CDD" id="cd02440">
    <property type="entry name" value="AdoMet_MTases"/>
    <property type="match status" value="1"/>
</dbReference>
<dbReference type="FunFam" id="3.40.50.150:FF:000010">
    <property type="entry name" value="Protein-L-isoaspartate O-methyltransferase"/>
    <property type="match status" value="1"/>
</dbReference>
<dbReference type="Gene3D" id="3.40.50.150">
    <property type="entry name" value="Vaccinia Virus protein VP39"/>
    <property type="match status" value="1"/>
</dbReference>
<dbReference type="HAMAP" id="MF_00090">
    <property type="entry name" value="PIMT"/>
    <property type="match status" value="1"/>
</dbReference>
<dbReference type="InterPro" id="IPR000682">
    <property type="entry name" value="PCMT"/>
</dbReference>
<dbReference type="InterPro" id="IPR029063">
    <property type="entry name" value="SAM-dependent_MTases_sf"/>
</dbReference>
<dbReference type="NCBIfam" id="TIGR00080">
    <property type="entry name" value="pimt"/>
    <property type="match status" value="1"/>
</dbReference>
<dbReference type="NCBIfam" id="NF001453">
    <property type="entry name" value="PRK00312.1"/>
    <property type="match status" value="1"/>
</dbReference>
<dbReference type="PANTHER" id="PTHR11579">
    <property type="entry name" value="PROTEIN-L-ISOASPARTATE O-METHYLTRANSFERASE"/>
    <property type="match status" value="1"/>
</dbReference>
<dbReference type="PANTHER" id="PTHR11579:SF0">
    <property type="entry name" value="PROTEIN-L-ISOASPARTATE(D-ASPARTATE) O-METHYLTRANSFERASE"/>
    <property type="match status" value="1"/>
</dbReference>
<dbReference type="Pfam" id="PF01135">
    <property type="entry name" value="PCMT"/>
    <property type="match status" value="1"/>
</dbReference>
<dbReference type="SUPFAM" id="SSF53335">
    <property type="entry name" value="S-adenosyl-L-methionine-dependent methyltransferases"/>
    <property type="match status" value="1"/>
</dbReference>
<dbReference type="PROSITE" id="PS01279">
    <property type="entry name" value="PCMT"/>
    <property type="match status" value="1"/>
</dbReference>
<protein>
    <recommendedName>
        <fullName evidence="1">Protein-L-isoaspartate O-methyltransferase</fullName>
        <ecNumber evidence="1">2.1.1.77</ecNumber>
    </recommendedName>
    <alternativeName>
        <fullName evidence="1">L-isoaspartyl protein carboxyl methyltransferase</fullName>
    </alternativeName>
    <alternativeName>
        <fullName evidence="1">Protein L-isoaspartyl methyltransferase</fullName>
    </alternativeName>
    <alternativeName>
        <fullName evidence="1">Protein-beta-aspartate methyltransferase</fullName>
        <shortName evidence="1">PIMT</shortName>
    </alternativeName>
</protein>
<keyword id="KW-0963">Cytoplasm</keyword>
<keyword id="KW-0489">Methyltransferase</keyword>
<keyword id="KW-1185">Reference proteome</keyword>
<keyword id="KW-0949">S-adenosyl-L-methionine</keyword>
<keyword id="KW-0808">Transferase</keyword>
<accession>A1B5M0</accession>
<comment type="function">
    <text evidence="1">Catalyzes the methyl esterification of L-isoaspartyl residues in peptides and proteins that result from spontaneous decomposition of normal L-aspartyl and L-asparaginyl residues. It plays a role in the repair and/or degradation of damaged proteins.</text>
</comment>
<comment type="catalytic activity">
    <reaction evidence="1">
        <text>[protein]-L-isoaspartate + S-adenosyl-L-methionine = [protein]-L-isoaspartate alpha-methyl ester + S-adenosyl-L-homocysteine</text>
        <dbReference type="Rhea" id="RHEA:12705"/>
        <dbReference type="Rhea" id="RHEA-COMP:12143"/>
        <dbReference type="Rhea" id="RHEA-COMP:12144"/>
        <dbReference type="ChEBI" id="CHEBI:57856"/>
        <dbReference type="ChEBI" id="CHEBI:59789"/>
        <dbReference type="ChEBI" id="CHEBI:90596"/>
        <dbReference type="ChEBI" id="CHEBI:90598"/>
        <dbReference type="EC" id="2.1.1.77"/>
    </reaction>
</comment>
<comment type="subcellular location">
    <subcellularLocation>
        <location evidence="1">Cytoplasm</location>
    </subcellularLocation>
</comment>
<comment type="similarity">
    <text evidence="1">Belongs to the methyltransferase superfamily. L-isoaspartyl/D-aspartyl protein methyltransferase family.</text>
</comment>
<organism>
    <name type="scientific">Paracoccus denitrificans (strain Pd 1222)</name>
    <dbReference type="NCBI Taxonomy" id="318586"/>
    <lineage>
        <taxon>Bacteria</taxon>
        <taxon>Pseudomonadati</taxon>
        <taxon>Pseudomonadota</taxon>
        <taxon>Alphaproteobacteria</taxon>
        <taxon>Rhodobacterales</taxon>
        <taxon>Paracoccaceae</taxon>
        <taxon>Paracoccus</taxon>
    </lineage>
</organism>
<reference key="1">
    <citation type="submission" date="2006-12" db="EMBL/GenBank/DDBJ databases">
        <title>Complete sequence of chromosome 1 of Paracoccus denitrificans PD1222.</title>
        <authorList>
            <person name="Copeland A."/>
            <person name="Lucas S."/>
            <person name="Lapidus A."/>
            <person name="Barry K."/>
            <person name="Detter J.C."/>
            <person name="Glavina del Rio T."/>
            <person name="Hammon N."/>
            <person name="Israni S."/>
            <person name="Dalin E."/>
            <person name="Tice H."/>
            <person name="Pitluck S."/>
            <person name="Munk A.C."/>
            <person name="Brettin T."/>
            <person name="Bruce D."/>
            <person name="Han C."/>
            <person name="Tapia R."/>
            <person name="Gilna P."/>
            <person name="Schmutz J."/>
            <person name="Larimer F."/>
            <person name="Land M."/>
            <person name="Hauser L."/>
            <person name="Kyrpides N."/>
            <person name="Lykidis A."/>
            <person name="Spiro S."/>
            <person name="Richardson D.J."/>
            <person name="Moir J.W.B."/>
            <person name="Ferguson S.J."/>
            <person name="van Spanning R.J.M."/>
            <person name="Richardson P."/>
        </authorList>
    </citation>
    <scope>NUCLEOTIDE SEQUENCE [LARGE SCALE GENOMIC DNA]</scope>
    <source>
        <strain>Pd 1222</strain>
    </source>
</reference>
<name>PIMT_PARDP</name>
<gene>
    <name evidence="1" type="primary">pcm</name>
    <name type="ordered locus">Pden_2730</name>
</gene>
<proteinExistence type="inferred from homology"/>
<sequence length="216" mass="23832">MSDDPETAERKMRFLFALRQRGVTDPRVLEAMERIDRGEFVRGHFEDRAYDDTPLPIPCGQTISQPSVVGLMTQALEVGPRDKVLEIGTGSGYQAAVLSLLCRRVYTIDRHRRLVAEAEALFRHLGLPNITALVGDGSRGLPEQAPFDRIMVTAAAEDPPGPLLAQLKIGGIMVVPVGQSDAVQTLIRVRRGENGFDYDELRQVRFVPLVEGLGQT</sequence>
<evidence type="ECO:0000255" key="1">
    <source>
        <dbReference type="HAMAP-Rule" id="MF_00090"/>
    </source>
</evidence>